<comment type="function">
    <text evidence="1 3">Gap junction protein that acts as a regulator of bladder capacity. A gap junction consists of a cluster of closely packed pairs of transmembrane channels, the connexons, through which materials of low MW diffuse from one cell to a neighboring cell. May play a critical role in the physiology of hearing by participating in the recycling of potassium to the cochlear endolymph. Negative regulator of bladder functional capacity: acts by enhancing intercellular electrical and chemical transmission, thus sensitizing bladder muscles to cholinergic neural stimuli and causing them to contract. May play a role in cell growth inhibition through the regulation of NOV expression and localization. Plays an essential role in gap junction communication in the ventricles (By similarity).</text>
</comment>
<comment type="subunit">
    <text evidence="1 2 3">A connexon is composed of a hexamer of connexins. Interacts with SGSM3 (By similarity). Interacts with RIC1/CIP150 (By similarity). Interacts with CNST and CSNK1D (By similarity). Interacts (via C-terminus) with TJP1. Interacts (via C-terminus) with SRC (via SH3 domain). Interacts (not ubiquitinated) with UBQLN4 (via UBA domain) (By similarity). Interacts with NOV. Interacts with TMEM65 (By similarity). Interacts with ANK3/ANKG and PKP2 (By similarity).</text>
</comment>
<comment type="subcellular location">
    <subcellularLocation>
        <location evidence="2">Cell membrane</location>
        <topology evidence="5">Multi-pass membrane protein</topology>
    </subcellularLocation>
    <subcellularLocation>
        <location evidence="2">Cell junction</location>
        <location evidence="2">Gap junction</location>
    </subcellularLocation>
    <subcellularLocation>
        <location evidence="3">Endoplasmic reticulum</location>
    </subcellularLocation>
    <text evidence="3">Localizes at the intercalated disk (ICD) in cardiomyocytes and proper localization at ICD is dependent on TMEM65.</text>
</comment>
<comment type="PTM">
    <text evidence="1 2 4">Phosphorylation at Ser-325, Ser-328 and Ser-330 by CK1 modulates gap junction assembly. Phosphorylated at Ser-368 by PRKCG; phosphorylation induces disassembly of gap junction plaques and inhibition of gap junction activity. Phosphorylation at Ser-368 by PRKCD triggers its internalization into small vesicles leading to proteasome-mediated degradation (By similarity).</text>
</comment>
<comment type="PTM">
    <text evidence="2">Sumoylated with SUMO1, SUMO2 and SUMO3, which may regulate the level of functional Cx43 gap junctions at the plasma membrane. May be desumoylated by SENP1 or SENP2 (By similarity).</text>
</comment>
<comment type="PTM">
    <text evidence="3">S-nitrosylation at Cys-271 is enriched at the muscle endothelial gap junction in arteries, it augments channel permeability and may regulate of smooth muscle cell to endothelial cell communication.</text>
</comment>
<comment type="PTM">
    <text evidence="3">Acetylated in the developing cortex; leading to delocalization from the cell membrane.</text>
</comment>
<comment type="similarity">
    <text evidence="7">Belongs to the connexin family. Alpha-type (group II) subfamily.</text>
</comment>
<dbReference type="EMBL" id="AY382593">
    <property type="protein sequence ID" value="AAR33087.1"/>
    <property type="molecule type" value="Genomic_DNA"/>
</dbReference>
<dbReference type="EMBL" id="X86023">
    <property type="protein sequence ID" value="CAA60018.1"/>
    <property type="molecule type" value="mRNA"/>
</dbReference>
<dbReference type="BMRB" id="Q29101"/>
<dbReference type="SMR" id="Q29101"/>
<dbReference type="CORUM" id="Q29101"/>
<dbReference type="FunCoup" id="Q29101">
    <property type="interactions" value="241"/>
</dbReference>
<dbReference type="STRING" id="9823.ENSSSCP00000004580"/>
<dbReference type="iPTMnet" id="Q29101"/>
<dbReference type="PaxDb" id="9823-ENSSSCP00000004580"/>
<dbReference type="PeptideAtlas" id="Q29101"/>
<dbReference type="eggNOG" id="ENOG502QRAE">
    <property type="taxonomic scope" value="Eukaryota"/>
</dbReference>
<dbReference type="InParanoid" id="Q29101"/>
<dbReference type="Proteomes" id="UP000008227">
    <property type="component" value="Unplaced"/>
</dbReference>
<dbReference type="Proteomes" id="UP000314985">
    <property type="component" value="Unplaced"/>
</dbReference>
<dbReference type="Proteomes" id="UP000694570">
    <property type="component" value="Unplaced"/>
</dbReference>
<dbReference type="Proteomes" id="UP000694571">
    <property type="component" value="Unplaced"/>
</dbReference>
<dbReference type="Proteomes" id="UP000694720">
    <property type="component" value="Unplaced"/>
</dbReference>
<dbReference type="Proteomes" id="UP000694722">
    <property type="component" value="Unplaced"/>
</dbReference>
<dbReference type="Proteomes" id="UP000694723">
    <property type="component" value="Unplaced"/>
</dbReference>
<dbReference type="Proteomes" id="UP000694724">
    <property type="component" value="Unplaced"/>
</dbReference>
<dbReference type="Proteomes" id="UP000694725">
    <property type="component" value="Unplaced"/>
</dbReference>
<dbReference type="Proteomes" id="UP000694726">
    <property type="component" value="Unplaced"/>
</dbReference>
<dbReference type="Proteomes" id="UP000694727">
    <property type="component" value="Unplaced"/>
</dbReference>
<dbReference type="Proteomes" id="UP000694728">
    <property type="component" value="Unplaced"/>
</dbReference>
<dbReference type="GO" id="GO:0016324">
    <property type="term" value="C:apical plasma membrane"/>
    <property type="evidence" value="ECO:0000314"/>
    <property type="project" value="AgBase"/>
</dbReference>
<dbReference type="GO" id="GO:0030054">
    <property type="term" value="C:cell junction"/>
    <property type="evidence" value="ECO:0000250"/>
    <property type="project" value="UniProtKB"/>
</dbReference>
<dbReference type="GO" id="GO:0005911">
    <property type="term" value="C:cell-cell junction"/>
    <property type="evidence" value="ECO:0000314"/>
    <property type="project" value="AgBase"/>
</dbReference>
<dbReference type="GO" id="GO:0005922">
    <property type="term" value="C:connexin complex"/>
    <property type="evidence" value="ECO:0000250"/>
    <property type="project" value="UniProtKB"/>
</dbReference>
<dbReference type="GO" id="GO:0005737">
    <property type="term" value="C:cytoplasm"/>
    <property type="evidence" value="ECO:0000314"/>
    <property type="project" value="AgBase"/>
</dbReference>
<dbReference type="GO" id="GO:0005783">
    <property type="term" value="C:endoplasmic reticulum"/>
    <property type="evidence" value="ECO:0007669"/>
    <property type="project" value="UniProtKB-SubCell"/>
</dbReference>
<dbReference type="GO" id="GO:0005921">
    <property type="term" value="C:gap junction"/>
    <property type="evidence" value="ECO:0000314"/>
    <property type="project" value="UniProtKB"/>
</dbReference>
<dbReference type="GO" id="GO:0005794">
    <property type="term" value="C:Golgi apparatus"/>
    <property type="evidence" value="ECO:0000314"/>
    <property type="project" value="AgBase"/>
</dbReference>
<dbReference type="GO" id="GO:0014704">
    <property type="term" value="C:intercalated disc"/>
    <property type="evidence" value="ECO:0000250"/>
    <property type="project" value="UniProtKB"/>
</dbReference>
<dbReference type="GO" id="GO:0005764">
    <property type="term" value="C:lysosome"/>
    <property type="evidence" value="ECO:0000314"/>
    <property type="project" value="AgBase"/>
</dbReference>
<dbReference type="GO" id="GO:0045121">
    <property type="term" value="C:membrane raft"/>
    <property type="evidence" value="ECO:0000314"/>
    <property type="project" value="AgBase"/>
</dbReference>
<dbReference type="GO" id="GO:0005739">
    <property type="term" value="C:mitochondrion"/>
    <property type="evidence" value="ECO:0000314"/>
    <property type="project" value="AgBase"/>
</dbReference>
<dbReference type="GO" id="GO:0005634">
    <property type="term" value="C:nucleus"/>
    <property type="evidence" value="ECO:0000314"/>
    <property type="project" value="AgBase"/>
</dbReference>
<dbReference type="GO" id="GO:0005886">
    <property type="term" value="C:plasma membrane"/>
    <property type="evidence" value="ECO:0000250"/>
    <property type="project" value="UniProtKB"/>
</dbReference>
<dbReference type="GO" id="GO:0005243">
    <property type="term" value="F:gap junction channel activity"/>
    <property type="evidence" value="ECO:0000318"/>
    <property type="project" value="GO_Central"/>
</dbReference>
<dbReference type="GO" id="GO:0055077">
    <property type="term" value="F:gap junction hemi-channel activity"/>
    <property type="evidence" value="ECO:0000250"/>
    <property type="project" value="UniProtKB"/>
</dbReference>
<dbReference type="GO" id="GO:0015631">
    <property type="term" value="F:tubulin binding"/>
    <property type="evidence" value="ECO:0000250"/>
    <property type="project" value="UniProtKB"/>
</dbReference>
<dbReference type="GO" id="GO:0060348">
    <property type="term" value="P:bone development"/>
    <property type="evidence" value="ECO:0000250"/>
    <property type="project" value="UniProtKB"/>
</dbReference>
<dbReference type="GO" id="GO:0046849">
    <property type="term" value="P:bone remodeling"/>
    <property type="evidence" value="ECO:0000250"/>
    <property type="project" value="UniProtKB"/>
</dbReference>
<dbReference type="GO" id="GO:0010644">
    <property type="term" value="P:cell communication by electrical coupling"/>
    <property type="evidence" value="ECO:0000318"/>
    <property type="project" value="GO_Central"/>
</dbReference>
<dbReference type="GO" id="GO:0007267">
    <property type="term" value="P:cell-cell signaling"/>
    <property type="evidence" value="ECO:0000318"/>
    <property type="project" value="GO_Central"/>
</dbReference>
<dbReference type="GO" id="GO:0036120">
    <property type="term" value="P:cellular response to platelet-derived growth factor stimulus"/>
    <property type="evidence" value="ECO:0000314"/>
    <property type="project" value="AgBase"/>
</dbReference>
<dbReference type="GO" id="GO:0007507">
    <property type="term" value="P:heart development"/>
    <property type="evidence" value="ECO:0000318"/>
    <property type="project" value="GO_Central"/>
</dbReference>
<dbReference type="GO" id="GO:0099111">
    <property type="term" value="P:microtubule-based transport"/>
    <property type="evidence" value="ECO:0000250"/>
    <property type="project" value="UniProtKB"/>
</dbReference>
<dbReference type="GO" id="GO:0030308">
    <property type="term" value="P:negative regulation of cell growth"/>
    <property type="evidence" value="ECO:0000250"/>
    <property type="project" value="UniProtKB"/>
</dbReference>
<dbReference type="GO" id="GO:0071673">
    <property type="term" value="P:positive regulation of smooth muscle cell chemotaxis"/>
    <property type="evidence" value="ECO:0000315"/>
    <property type="project" value="AgBase"/>
</dbReference>
<dbReference type="GO" id="GO:0042981">
    <property type="term" value="P:regulation of apoptotic process"/>
    <property type="evidence" value="ECO:0000250"/>
    <property type="project" value="UniProtKB"/>
</dbReference>
<dbReference type="GO" id="GO:0002931">
    <property type="term" value="P:response to ischemia"/>
    <property type="evidence" value="ECO:0000314"/>
    <property type="project" value="AgBase"/>
</dbReference>
<dbReference type="GO" id="GO:0009611">
    <property type="term" value="P:response to wounding"/>
    <property type="evidence" value="ECO:0000314"/>
    <property type="project" value="AgBase"/>
</dbReference>
<dbReference type="GO" id="GO:0007283">
    <property type="term" value="P:spermatogenesis"/>
    <property type="evidence" value="ECO:0000250"/>
    <property type="project" value="UniProtKB"/>
</dbReference>
<dbReference type="FunFam" id="1.20.1440.80:FF:000001">
    <property type="entry name" value="Gap junction alpha-1"/>
    <property type="match status" value="1"/>
</dbReference>
<dbReference type="FunFam" id="1.20.5.1130:FF:000001">
    <property type="entry name" value="Gap junction alpha-1"/>
    <property type="match status" value="1"/>
</dbReference>
<dbReference type="Gene3D" id="1.20.5.1130">
    <property type="entry name" value="Connexin43"/>
    <property type="match status" value="1"/>
</dbReference>
<dbReference type="Gene3D" id="1.20.1440.80">
    <property type="entry name" value="Gap junction channel protein cysteine-rich domain"/>
    <property type="match status" value="1"/>
</dbReference>
<dbReference type="InterPro" id="IPR035091">
    <property type="entry name" value="Alpha_helix_dom_sf"/>
</dbReference>
<dbReference type="InterPro" id="IPR000500">
    <property type="entry name" value="Connexin"/>
</dbReference>
<dbReference type="InterPro" id="IPR002261">
    <property type="entry name" value="Connexin43"/>
</dbReference>
<dbReference type="InterPro" id="IPR013124">
    <property type="entry name" value="Connexin43_C"/>
</dbReference>
<dbReference type="InterPro" id="IPR034634">
    <property type="entry name" value="Connexin_C"/>
</dbReference>
<dbReference type="InterPro" id="IPR019570">
    <property type="entry name" value="Connexin_CCC"/>
</dbReference>
<dbReference type="InterPro" id="IPR017990">
    <property type="entry name" value="Connexin_CS"/>
</dbReference>
<dbReference type="InterPro" id="IPR013092">
    <property type="entry name" value="Connexin_N"/>
</dbReference>
<dbReference type="InterPro" id="IPR038359">
    <property type="entry name" value="Connexin_N_sf"/>
</dbReference>
<dbReference type="PANTHER" id="PTHR11984">
    <property type="entry name" value="CONNEXIN"/>
    <property type="match status" value="1"/>
</dbReference>
<dbReference type="PANTHER" id="PTHR11984:SF33">
    <property type="entry name" value="GAP JUNCTION ALPHA-1 PROTEIN"/>
    <property type="match status" value="1"/>
</dbReference>
<dbReference type="Pfam" id="PF00029">
    <property type="entry name" value="Connexin"/>
    <property type="match status" value="1"/>
</dbReference>
<dbReference type="Pfam" id="PF03508">
    <property type="entry name" value="Connexin43"/>
    <property type="match status" value="1"/>
</dbReference>
<dbReference type="PRINTS" id="PR00206">
    <property type="entry name" value="CONNEXIN"/>
</dbReference>
<dbReference type="PRINTS" id="PR01132">
    <property type="entry name" value="CONNEXINA1"/>
</dbReference>
<dbReference type="SMART" id="SM00037">
    <property type="entry name" value="CNX"/>
    <property type="match status" value="1"/>
</dbReference>
<dbReference type="SMART" id="SM01089">
    <property type="entry name" value="Connexin_CCC"/>
    <property type="match status" value="1"/>
</dbReference>
<dbReference type="SUPFAM" id="SSF118220">
    <property type="entry name" value="Connexin43"/>
    <property type="match status" value="1"/>
</dbReference>
<dbReference type="PROSITE" id="PS00407">
    <property type="entry name" value="CONNEXINS_1"/>
    <property type="match status" value="1"/>
</dbReference>
<dbReference type="PROSITE" id="PS00408">
    <property type="entry name" value="CONNEXINS_2"/>
    <property type="match status" value="1"/>
</dbReference>
<feature type="initiator methionine" description="Removed" evidence="1">
    <location>
        <position position="1"/>
    </location>
</feature>
<feature type="chain" id="PRO_0000057803" description="Gap junction alpha-1 protein">
    <location>
        <begin position="2"/>
        <end position="382"/>
    </location>
</feature>
<feature type="topological domain" description="Cytoplasmic" evidence="1">
    <location>
        <begin position="2"/>
        <end position="23"/>
    </location>
</feature>
<feature type="transmembrane region" description="Helical" evidence="5">
    <location>
        <begin position="24"/>
        <end position="44"/>
    </location>
</feature>
<feature type="topological domain" description="Extracellular" evidence="1">
    <location>
        <begin position="45"/>
        <end position="76"/>
    </location>
</feature>
<feature type="transmembrane region" description="Helical" evidence="5">
    <location>
        <begin position="77"/>
        <end position="97"/>
    </location>
</feature>
<feature type="topological domain" description="Cytoplasmic" evidence="1">
    <location>
        <begin position="98"/>
        <end position="155"/>
    </location>
</feature>
<feature type="transmembrane region" description="Helical" evidence="5">
    <location>
        <begin position="156"/>
        <end position="176"/>
    </location>
</feature>
<feature type="topological domain" description="Extracellular" evidence="1">
    <location>
        <begin position="177"/>
        <end position="207"/>
    </location>
</feature>
<feature type="transmembrane region" description="Helical" evidence="5">
    <location>
        <begin position="208"/>
        <end position="228"/>
    </location>
</feature>
<feature type="topological domain" description="Cytoplasmic" evidence="1">
    <location>
        <begin position="229"/>
        <end position="382"/>
    </location>
</feature>
<feature type="region of interest" description="Interaction with NOV" evidence="1">
    <location>
        <begin position="244"/>
        <end position="382"/>
    </location>
</feature>
<feature type="region of interest" description="Interaction with UBQLN4" evidence="3">
    <location>
        <begin position="264"/>
        <end position="382"/>
    </location>
</feature>
<feature type="region of interest" description="Disordered" evidence="6">
    <location>
        <begin position="317"/>
        <end position="382"/>
    </location>
</feature>
<feature type="compositionally biased region" description="Polar residues" evidence="6">
    <location>
        <begin position="317"/>
        <end position="332"/>
    </location>
</feature>
<feature type="compositionally biased region" description="Basic and acidic residues" evidence="6">
    <location>
        <begin position="342"/>
        <end position="351"/>
    </location>
</feature>
<feature type="compositionally biased region" description="Low complexity" evidence="6">
    <location>
        <begin position="362"/>
        <end position="374"/>
    </location>
</feature>
<feature type="modified residue" description="Phosphoserine" evidence="1">
    <location>
        <position position="5"/>
    </location>
</feature>
<feature type="modified residue" description="Phosphotyrosine" evidence="3">
    <location>
        <position position="247"/>
    </location>
</feature>
<feature type="modified residue" description="Phosphoserine" evidence="2">
    <location>
        <position position="255"/>
    </location>
</feature>
<feature type="modified residue" description="Phosphoserine" evidence="1">
    <location>
        <position position="257"/>
    </location>
</feature>
<feature type="modified residue" description="Phosphoserine" evidence="2">
    <location>
        <position position="262"/>
    </location>
</feature>
<feature type="modified residue" description="S-nitrosocysteine" evidence="3">
    <location>
        <position position="271"/>
    </location>
</feature>
<feature type="modified residue" description="Phosphothreonine" evidence="3">
    <location>
        <position position="275"/>
    </location>
</feature>
<feature type="modified residue" description="Phosphoserine" evidence="3">
    <location>
        <position position="306"/>
    </location>
</feature>
<feature type="modified residue" description="Phosphoserine" evidence="2">
    <location>
        <position position="314"/>
    </location>
</feature>
<feature type="modified residue" description="Phosphoserine; by CK1" evidence="2">
    <location>
        <position position="325"/>
    </location>
</feature>
<feature type="modified residue" description="Phosphothreonine" evidence="3">
    <location>
        <position position="326"/>
    </location>
</feature>
<feature type="modified residue" description="Phosphoserine; by CK1" evidence="2">
    <location>
        <position position="328"/>
    </location>
</feature>
<feature type="modified residue" description="Phosphoserine; by CK1" evidence="2">
    <location>
        <position position="330"/>
    </location>
</feature>
<feature type="modified residue" description="Phosphoserine" evidence="2">
    <location>
        <position position="344"/>
    </location>
</feature>
<feature type="modified residue" description="Phosphoserine" evidence="3">
    <location>
        <position position="365"/>
    </location>
</feature>
<feature type="modified residue" description="Phosphoserine; by PKC/PRKCG and PKC/PRKCD" evidence="3">
    <location>
        <position position="368"/>
    </location>
</feature>
<feature type="modified residue" description="Phosphoserine" evidence="3">
    <location>
        <position position="369"/>
    </location>
</feature>
<feature type="modified residue" description="Phosphoserine" evidence="1">
    <location>
        <position position="373"/>
    </location>
</feature>
<feature type="disulfide bond" evidence="2">
    <location>
        <begin position="54"/>
        <end position="192"/>
    </location>
</feature>
<feature type="disulfide bond" evidence="2">
    <location>
        <begin position="187"/>
        <end position="198"/>
    </location>
</feature>
<feature type="cross-link" description="Glycyl lysine isopeptide (Lys-Gly) (interchain with G-Cter in SUMO)" evidence="2">
    <location>
        <position position="144"/>
    </location>
</feature>
<feature type="cross-link" description="Glycyl lysine isopeptide (Lys-Gly) (interchain with G-Cter in SUMO)" evidence="2">
    <location>
        <position position="237"/>
    </location>
</feature>
<accession>Q29101</accession>
<accession>Q6TYA4</accession>
<protein>
    <recommendedName>
        <fullName>Gap junction alpha-1 protein</fullName>
    </recommendedName>
    <alternativeName>
        <fullName>Connexin-43</fullName>
        <shortName>Cx43</shortName>
    </alternativeName>
</protein>
<organism>
    <name type="scientific">Sus scrofa</name>
    <name type="common">Pig</name>
    <dbReference type="NCBI Taxonomy" id="9823"/>
    <lineage>
        <taxon>Eukaryota</taxon>
        <taxon>Metazoa</taxon>
        <taxon>Chordata</taxon>
        <taxon>Craniata</taxon>
        <taxon>Vertebrata</taxon>
        <taxon>Euteleostomi</taxon>
        <taxon>Mammalia</taxon>
        <taxon>Eutheria</taxon>
        <taxon>Laurasiatheria</taxon>
        <taxon>Artiodactyla</taxon>
        <taxon>Suina</taxon>
        <taxon>Suidae</taxon>
        <taxon>Sus</taxon>
    </lineage>
</organism>
<reference key="1">
    <citation type="journal article" date="2004" name="Dev. Genes Evol.">
        <title>Connexin43 orthologues in vertebrates: phylogeny from fish to man.</title>
        <authorList>
            <person name="van der Heyden M.A."/>
            <person name="van Eijk M."/>
            <person name="Wilders R."/>
            <person name="de Bakker J.M."/>
            <person name="Opthof T."/>
        </authorList>
    </citation>
    <scope>NUCLEOTIDE SEQUENCE [GENOMIC DNA]</scope>
</reference>
<reference key="2">
    <citation type="journal article" date="1996" name="J. Cell Sci.">
        <title>Porcine aortic endothelial gap junctions: identification and permeation by caged InsP3.</title>
        <authorList>
            <person name="Carter T.D."/>
            <person name="Cen X.Y."/>
            <person name="Carlile G."/>
            <person name="Kalapothakis E."/>
            <person name="Ogden D."/>
            <person name="Evans W.H."/>
        </authorList>
    </citation>
    <scope>NUCLEOTIDE SEQUENCE [MRNA] OF 247-338</scope>
    <source>
        <strain>Large white X Duroc</strain>
        <tissue>Aortic endothelium</tissue>
    </source>
</reference>
<name>CXA1_PIG</name>
<sequence length="382" mass="43049">MGDWSALGKLLDKVQAYSTAGGKVWLSVLFIFRILLLGTAVESAWGDEQSAFRCNTQQPGCENVCYDKSFPISHVRFWVLQIIFVSVPTLLYLAHVFYVMRKEEKLNKKEEELKVAQTDGVNVEMHLKQIEIKKFKYGIEEHGKVKMRGGLLRTYIISILFKSVFEVAFLLIQWYIYGFSLSAVYTCKRDPCPHQVDCFLSRPTEKTIFIIFMLVVSLVSLALNIIELFYAFFKGVKDRVKGKSDPYHATTGPLSPSKDCGSPKYAYFNGCSSPTAPLSPMSPPGYKLVTGDRNNSSCRNYNKQASEQNWANYSAEQNRMGQAGSTISNSHAQPFDFPDDNQNSKKLDAGHELQPLAIVDQRPSSRASSRASSRPRPDDLEI</sequence>
<evidence type="ECO:0000250" key="1">
    <source>
        <dbReference type="UniProtKB" id="P08050"/>
    </source>
</evidence>
<evidence type="ECO:0000250" key="2">
    <source>
        <dbReference type="UniProtKB" id="P17302"/>
    </source>
</evidence>
<evidence type="ECO:0000250" key="3">
    <source>
        <dbReference type="UniProtKB" id="P23242"/>
    </source>
</evidence>
<evidence type="ECO:0000250" key="4">
    <source>
        <dbReference type="UniProtKB" id="Q6TYA7"/>
    </source>
</evidence>
<evidence type="ECO:0000255" key="5"/>
<evidence type="ECO:0000256" key="6">
    <source>
        <dbReference type="SAM" id="MobiDB-lite"/>
    </source>
</evidence>
<evidence type="ECO:0000305" key="7"/>
<gene>
    <name type="primary">GJA1</name>
</gene>
<proteinExistence type="evidence at transcript level"/>
<keyword id="KW-0007">Acetylation</keyword>
<keyword id="KW-0965">Cell junction</keyword>
<keyword id="KW-1003">Cell membrane</keyword>
<keyword id="KW-1015">Disulfide bond</keyword>
<keyword id="KW-0256">Endoplasmic reticulum</keyword>
<keyword id="KW-0303">Gap junction</keyword>
<keyword id="KW-1017">Isopeptide bond</keyword>
<keyword id="KW-0472">Membrane</keyword>
<keyword id="KW-0597">Phosphoprotein</keyword>
<keyword id="KW-1185">Reference proteome</keyword>
<keyword id="KW-0702">S-nitrosylation</keyword>
<keyword id="KW-0812">Transmembrane</keyword>
<keyword id="KW-1133">Transmembrane helix</keyword>
<keyword id="KW-0832">Ubl conjugation</keyword>